<reference key="1">
    <citation type="journal article" date="1995" name="J. Bacteriol.">
        <title>Molecular and expression analysis of the Rhizobium meliloti phosphoenolpyruvate carboxykinase (pckA) gene.</title>
        <authorList>
            <person name="Oesteraas M."/>
            <person name="Driscoll B.T."/>
            <person name="Finan T.M."/>
        </authorList>
    </citation>
    <scope>NUCLEOTIDE SEQUENCE [GENOMIC DNA]</scope>
    <source>
        <strain>SU47 / 1021</strain>
    </source>
</reference>
<reference key="2">
    <citation type="journal article" date="2001" name="Proc. Natl. Acad. Sci. U.S.A.">
        <title>Analysis of the chromosome sequence of the legume symbiont Sinorhizobium meliloti strain 1021.</title>
        <authorList>
            <person name="Capela D."/>
            <person name="Barloy-Hubler F."/>
            <person name="Gouzy J."/>
            <person name="Bothe G."/>
            <person name="Ampe F."/>
            <person name="Batut J."/>
            <person name="Boistard P."/>
            <person name="Becker A."/>
            <person name="Boutry M."/>
            <person name="Cadieu E."/>
            <person name="Dreano S."/>
            <person name="Gloux S."/>
            <person name="Godrie T."/>
            <person name="Goffeau A."/>
            <person name="Kahn D."/>
            <person name="Kiss E."/>
            <person name="Lelaure V."/>
            <person name="Masuy D."/>
            <person name="Pohl T."/>
            <person name="Portetelle D."/>
            <person name="Puehler A."/>
            <person name="Purnelle B."/>
            <person name="Ramsperger U."/>
            <person name="Renard C."/>
            <person name="Thebault P."/>
            <person name="Vandenbol M."/>
            <person name="Weidner S."/>
            <person name="Galibert F."/>
        </authorList>
    </citation>
    <scope>NUCLEOTIDE SEQUENCE [LARGE SCALE GENOMIC DNA]</scope>
    <source>
        <strain>1021</strain>
    </source>
</reference>
<reference key="3">
    <citation type="journal article" date="2001" name="Science">
        <title>The composite genome of the legume symbiont Sinorhizobium meliloti.</title>
        <authorList>
            <person name="Galibert F."/>
            <person name="Finan T.M."/>
            <person name="Long S.R."/>
            <person name="Puehler A."/>
            <person name="Abola P."/>
            <person name="Ampe F."/>
            <person name="Barloy-Hubler F."/>
            <person name="Barnett M.J."/>
            <person name="Becker A."/>
            <person name="Boistard P."/>
            <person name="Bothe G."/>
            <person name="Boutry M."/>
            <person name="Bowser L."/>
            <person name="Buhrmester J."/>
            <person name="Cadieu E."/>
            <person name="Capela D."/>
            <person name="Chain P."/>
            <person name="Cowie A."/>
            <person name="Davis R.W."/>
            <person name="Dreano S."/>
            <person name="Federspiel N.A."/>
            <person name="Fisher R.F."/>
            <person name="Gloux S."/>
            <person name="Godrie T."/>
            <person name="Goffeau A."/>
            <person name="Golding B."/>
            <person name="Gouzy J."/>
            <person name="Gurjal M."/>
            <person name="Hernandez-Lucas I."/>
            <person name="Hong A."/>
            <person name="Huizar L."/>
            <person name="Hyman R.W."/>
            <person name="Jones T."/>
            <person name="Kahn D."/>
            <person name="Kahn M.L."/>
            <person name="Kalman S."/>
            <person name="Keating D.H."/>
            <person name="Kiss E."/>
            <person name="Komp C."/>
            <person name="Lelaure V."/>
            <person name="Masuy D."/>
            <person name="Palm C."/>
            <person name="Peck M.C."/>
            <person name="Pohl T.M."/>
            <person name="Portetelle D."/>
            <person name="Purnelle B."/>
            <person name="Ramsperger U."/>
            <person name="Surzycki R."/>
            <person name="Thebault P."/>
            <person name="Vandenbol M."/>
            <person name="Vorhoelter F.J."/>
            <person name="Weidner S."/>
            <person name="Wells D.H."/>
            <person name="Wong K."/>
            <person name="Yeh K.-C."/>
            <person name="Batut J."/>
        </authorList>
    </citation>
    <scope>NUCLEOTIDE SEQUENCE [LARGE SCALE GENOMIC DNA]</scope>
    <source>
        <strain>1021</strain>
    </source>
</reference>
<sequence length="536" mass="58120">MDELGSRNPSIGLESIGFSDLSVVRYNFEAAQLYEEALARGEAELTAHGALCARTGQHTGRSPKDKYVVRDANTADQIWWDNNSAISPEHFEVLRRDMLAHAKGMSLYVQDLVGGADPENALPTRVVTEFAWHSLFIRNLLIRPEREALPSFQPKLTIIDLPSFKADPVRHGCRSETVIACDLTNGLVLIGGTSYAGEMKKSVFTVLNYLLPEKSVMPMHCSANVGPAGDTAIFFGLSGTGKTTLSADPNRTLIGDDEHGWSEKGVFNFEGGCYAKAIRLSEAAEPEIFATTRRFGTVMENVVLDERRLPDFDDGSLTENTRCAYPLHFIPNASKTGTAPQPRTIIMLTADAFGVLPPIAKLTPEQAMYHFLSGYTAKVAGTEKGVTEPEATFSTCFGAPFMPRHPSEYGNLLKDLIARNGVTCWLVNTGWTGGAFGTGSRMPIKVTRALLSAALDGSLNNASFRTDANFGFAVPVSVPGVEAGILDPRSTWADGVAYDTQARRLVDMFIANFAKFERHVDGSVRDAAPGARVAAE</sequence>
<proteinExistence type="inferred from homology"/>
<protein>
    <recommendedName>
        <fullName evidence="1">Phosphoenolpyruvate carboxykinase (ATP)</fullName>
        <shortName evidence="1">PCK</shortName>
        <shortName evidence="1">PEP carboxykinase</shortName>
        <shortName evidence="1">PEPCK</shortName>
        <ecNumber evidence="1">4.1.1.49</ecNumber>
    </recommendedName>
</protein>
<gene>
    <name evidence="1" type="primary">pckA</name>
    <name type="ordered locus">R00045</name>
    <name type="ORF">SMc02562</name>
</gene>
<evidence type="ECO:0000255" key="1">
    <source>
        <dbReference type="HAMAP-Rule" id="MF_00453"/>
    </source>
</evidence>
<comment type="function">
    <text evidence="1">Involved in the gluconeogenesis. Catalyzes the conversion of oxaloacetate (OAA) to phosphoenolpyruvate (PEP) through direct phosphoryl transfer between the nucleoside triphosphate and OAA.</text>
</comment>
<comment type="catalytic activity">
    <reaction evidence="1">
        <text>oxaloacetate + ATP = phosphoenolpyruvate + ADP + CO2</text>
        <dbReference type="Rhea" id="RHEA:18617"/>
        <dbReference type="ChEBI" id="CHEBI:16452"/>
        <dbReference type="ChEBI" id="CHEBI:16526"/>
        <dbReference type="ChEBI" id="CHEBI:30616"/>
        <dbReference type="ChEBI" id="CHEBI:58702"/>
        <dbReference type="ChEBI" id="CHEBI:456216"/>
        <dbReference type="EC" id="4.1.1.49"/>
    </reaction>
</comment>
<comment type="cofactor">
    <cofactor evidence="1">
        <name>Mn(2+)</name>
        <dbReference type="ChEBI" id="CHEBI:29035"/>
    </cofactor>
    <text evidence="1">Binds 1 Mn(2+) ion per subunit.</text>
</comment>
<comment type="pathway">
    <text evidence="1">Carbohydrate biosynthesis; gluconeogenesis.</text>
</comment>
<comment type="subcellular location">
    <subcellularLocation>
        <location evidence="1">Cytoplasm</location>
    </subcellularLocation>
</comment>
<comment type="similarity">
    <text evidence="1">Belongs to the phosphoenolpyruvate carboxykinase (ATP) family.</text>
</comment>
<name>PCKA_RHIME</name>
<feature type="chain" id="PRO_0000203836" description="Phosphoenolpyruvate carboxykinase (ATP)">
    <location>
        <begin position="1"/>
        <end position="536"/>
    </location>
</feature>
<feature type="binding site" evidence="1">
    <location>
        <position position="61"/>
    </location>
    <ligand>
        <name>substrate</name>
    </ligand>
</feature>
<feature type="binding site" evidence="1">
    <location>
        <position position="195"/>
    </location>
    <ligand>
        <name>substrate</name>
    </ligand>
</feature>
<feature type="binding site" evidence="1">
    <location>
        <position position="201"/>
    </location>
    <ligand>
        <name>ATP</name>
        <dbReference type="ChEBI" id="CHEBI:30616"/>
    </ligand>
</feature>
<feature type="binding site" evidence="1">
    <location>
        <position position="201"/>
    </location>
    <ligand>
        <name>Mn(2+)</name>
        <dbReference type="ChEBI" id="CHEBI:29035"/>
    </ligand>
</feature>
<feature type="binding site" evidence="1">
    <location>
        <position position="201"/>
    </location>
    <ligand>
        <name>substrate</name>
    </ligand>
</feature>
<feature type="binding site" evidence="1">
    <location>
        <position position="220"/>
    </location>
    <ligand>
        <name>ATP</name>
        <dbReference type="ChEBI" id="CHEBI:30616"/>
    </ligand>
</feature>
<feature type="binding site" evidence="1">
    <location>
        <position position="220"/>
    </location>
    <ligand>
        <name>Mn(2+)</name>
        <dbReference type="ChEBI" id="CHEBI:29035"/>
    </ligand>
</feature>
<feature type="binding site" evidence="1">
    <location>
        <begin position="236"/>
        <end position="244"/>
    </location>
    <ligand>
        <name>ATP</name>
        <dbReference type="ChEBI" id="CHEBI:30616"/>
    </ligand>
</feature>
<feature type="binding site" evidence="1">
    <location>
        <position position="257"/>
    </location>
    <ligand>
        <name>Mn(2+)</name>
        <dbReference type="ChEBI" id="CHEBI:29035"/>
    </ligand>
</feature>
<feature type="binding site" evidence="1">
    <location>
        <position position="285"/>
    </location>
    <ligand>
        <name>ATP</name>
        <dbReference type="ChEBI" id="CHEBI:30616"/>
    </ligand>
</feature>
<feature type="binding site" evidence="1">
    <location>
        <position position="322"/>
    </location>
    <ligand>
        <name>ATP</name>
        <dbReference type="ChEBI" id="CHEBI:30616"/>
    </ligand>
</feature>
<feature type="binding site" evidence="1">
    <location>
        <position position="322"/>
    </location>
    <ligand>
        <name>substrate</name>
    </ligand>
</feature>
<feature type="binding site" evidence="1">
    <location>
        <position position="447"/>
    </location>
    <ligand>
        <name>ATP</name>
        <dbReference type="ChEBI" id="CHEBI:30616"/>
    </ligand>
</feature>
<dbReference type="EC" id="4.1.1.49" evidence="1"/>
<dbReference type="EMBL" id="U15199">
    <property type="protein sequence ID" value="AAA69973.1"/>
    <property type="molecule type" value="Genomic_DNA"/>
</dbReference>
<dbReference type="EMBL" id="AL591688">
    <property type="protein sequence ID" value="CAC41432.1"/>
    <property type="molecule type" value="Genomic_DNA"/>
</dbReference>
<dbReference type="RefSeq" id="NP_384151.1">
    <property type="nucleotide sequence ID" value="NC_003047.1"/>
</dbReference>
<dbReference type="RefSeq" id="WP_010968314.1">
    <property type="nucleotide sequence ID" value="NC_003047.1"/>
</dbReference>
<dbReference type="SMR" id="P43085"/>
<dbReference type="EnsemblBacteria" id="CAC41432">
    <property type="protein sequence ID" value="CAC41432"/>
    <property type="gene ID" value="SMc02562"/>
</dbReference>
<dbReference type="KEGG" id="sme:SMc02562"/>
<dbReference type="PATRIC" id="fig|266834.11.peg.1399"/>
<dbReference type="eggNOG" id="COG1866">
    <property type="taxonomic scope" value="Bacteria"/>
</dbReference>
<dbReference type="HOGENOM" id="CLU_018247_0_1_5"/>
<dbReference type="OrthoDB" id="9806325at2"/>
<dbReference type="UniPathway" id="UPA00138"/>
<dbReference type="Proteomes" id="UP000001976">
    <property type="component" value="Chromosome"/>
</dbReference>
<dbReference type="GO" id="GO:0005829">
    <property type="term" value="C:cytosol"/>
    <property type="evidence" value="ECO:0007669"/>
    <property type="project" value="TreeGrafter"/>
</dbReference>
<dbReference type="GO" id="GO:0005524">
    <property type="term" value="F:ATP binding"/>
    <property type="evidence" value="ECO:0007669"/>
    <property type="project" value="UniProtKB-UniRule"/>
</dbReference>
<dbReference type="GO" id="GO:0046872">
    <property type="term" value="F:metal ion binding"/>
    <property type="evidence" value="ECO:0007669"/>
    <property type="project" value="UniProtKB-KW"/>
</dbReference>
<dbReference type="GO" id="GO:0004612">
    <property type="term" value="F:phosphoenolpyruvate carboxykinase (ATP) activity"/>
    <property type="evidence" value="ECO:0007669"/>
    <property type="project" value="UniProtKB-UniRule"/>
</dbReference>
<dbReference type="GO" id="GO:0006094">
    <property type="term" value="P:gluconeogenesis"/>
    <property type="evidence" value="ECO:0007669"/>
    <property type="project" value="UniProtKB-UniRule"/>
</dbReference>
<dbReference type="CDD" id="cd00484">
    <property type="entry name" value="PEPCK_ATP"/>
    <property type="match status" value="1"/>
</dbReference>
<dbReference type="Gene3D" id="3.90.228.20">
    <property type="match status" value="1"/>
</dbReference>
<dbReference type="Gene3D" id="3.40.449.10">
    <property type="entry name" value="Phosphoenolpyruvate Carboxykinase, domain 1"/>
    <property type="match status" value="1"/>
</dbReference>
<dbReference type="Gene3D" id="2.170.8.10">
    <property type="entry name" value="Phosphoenolpyruvate Carboxykinase, domain 2"/>
    <property type="match status" value="1"/>
</dbReference>
<dbReference type="HAMAP" id="MF_00453">
    <property type="entry name" value="PEPCK_ATP"/>
    <property type="match status" value="1"/>
</dbReference>
<dbReference type="InterPro" id="IPR001272">
    <property type="entry name" value="PEP_carboxykinase_ATP"/>
</dbReference>
<dbReference type="InterPro" id="IPR013035">
    <property type="entry name" value="PEP_carboxykinase_C"/>
</dbReference>
<dbReference type="InterPro" id="IPR008210">
    <property type="entry name" value="PEP_carboxykinase_N"/>
</dbReference>
<dbReference type="InterPro" id="IPR015994">
    <property type="entry name" value="PEPCK_ATP_CS"/>
</dbReference>
<dbReference type="NCBIfam" id="TIGR00224">
    <property type="entry name" value="pckA"/>
    <property type="match status" value="1"/>
</dbReference>
<dbReference type="NCBIfam" id="NF006820">
    <property type="entry name" value="PRK09344.1-2"/>
    <property type="match status" value="1"/>
</dbReference>
<dbReference type="NCBIfam" id="NF006821">
    <property type="entry name" value="PRK09344.1-3"/>
    <property type="match status" value="1"/>
</dbReference>
<dbReference type="NCBIfam" id="NF006822">
    <property type="entry name" value="PRK09344.1-4"/>
    <property type="match status" value="1"/>
</dbReference>
<dbReference type="PANTHER" id="PTHR30031:SF0">
    <property type="entry name" value="PHOSPHOENOLPYRUVATE CARBOXYKINASE (ATP)"/>
    <property type="match status" value="1"/>
</dbReference>
<dbReference type="PANTHER" id="PTHR30031">
    <property type="entry name" value="PHOSPHOENOLPYRUVATE CARBOXYKINASE ATP"/>
    <property type="match status" value="1"/>
</dbReference>
<dbReference type="Pfam" id="PF01293">
    <property type="entry name" value="PEPCK_ATP"/>
    <property type="match status" value="1"/>
</dbReference>
<dbReference type="PIRSF" id="PIRSF006294">
    <property type="entry name" value="PEP_crbxkin"/>
    <property type="match status" value="1"/>
</dbReference>
<dbReference type="SUPFAM" id="SSF68923">
    <property type="entry name" value="PEP carboxykinase N-terminal domain"/>
    <property type="match status" value="1"/>
</dbReference>
<dbReference type="SUPFAM" id="SSF53795">
    <property type="entry name" value="PEP carboxykinase-like"/>
    <property type="match status" value="1"/>
</dbReference>
<dbReference type="PROSITE" id="PS00532">
    <property type="entry name" value="PEPCK_ATP"/>
    <property type="match status" value="1"/>
</dbReference>
<accession>P43085</accession>
<keyword id="KW-0067">ATP-binding</keyword>
<keyword id="KW-0963">Cytoplasm</keyword>
<keyword id="KW-0210">Decarboxylase</keyword>
<keyword id="KW-0312">Gluconeogenesis</keyword>
<keyword id="KW-0456">Lyase</keyword>
<keyword id="KW-0464">Manganese</keyword>
<keyword id="KW-0479">Metal-binding</keyword>
<keyword id="KW-0547">Nucleotide-binding</keyword>
<keyword id="KW-1185">Reference proteome</keyword>
<organism>
    <name type="scientific">Rhizobium meliloti (strain 1021)</name>
    <name type="common">Ensifer meliloti</name>
    <name type="synonym">Sinorhizobium meliloti</name>
    <dbReference type="NCBI Taxonomy" id="266834"/>
    <lineage>
        <taxon>Bacteria</taxon>
        <taxon>Pseudomonadati</taxon>
        <taxon>Pseudomonadota</taxon>
        <taxon>Alphaproteobacteria</taxon>
        <taxon>Hyphomicrobiales</taxon>
        <taxon>Rhizobiaceae</taxon>
        <taxon>Sinorhizobium/Ensifer group</taxon>
        <taxon>Sinorhizobium</taxon>
    </lineage>
</organism>